<evidence type="ECO:0000255" key="1">
    <source>
        <dbReference type="HAMAP-Rule" id="MF_00267"/>
    </source>
</evidence>
<evidence type="ECO:0000256" key="2">
    <source>
        <dbReference type="SAM" id="MobiDB-lite"/>
    </source>
</evidence>
<organism>
    <name type="scientific">Salmonella paratyphi A (strain ATCC 9150 / SARB42)</name>
    <dbReference type="NCBI Taxonomy" id="295319"/>
    <lineage>
        <taxon>Bacteria</taxon>
        <taxon>Pseudomonadati</taxon>
        <taxon>Pseudomonadota</taxon>
        <taxon>Gammaproteobacteria</taxon>
        <taxon>Enterobacterales</taxon>
        <taxon>Enterobacteriaceae</taxon>
        <taxon>Salmonella</taxon>
    </lineage>
</organism>
<reference key="1">
    <citation type="journal article" date="2004" name="Nat. Genet.">
        <title>Comparison of genome degradation in Paratyphi A and Typhi, human-restricted serovars of Salmonella enterica that cause typhoid.</title>
        <authorList>
            <person name="McClelland M."/>
            <person name="Sanderson K.E."/>
            <person name="Clifton S.W."/>
            <person name="Latreille P."/>
            <person name="Porwollik S."/>
            <person name="Sabo A."/>
            <person name="Meyer R."/>
            <person name="Bieri T."/>
            <person name="Ozersky P."/>
            <person name="McLellan M."/>
            <person name="Harkins C.R."/>
            <person name="Wang C."/>
            <person name="Nguyen C."/>
            <person name="Berghoff A."/>
            <person name="Elliott G."/>
            <person name="Kohlberg S."/>
            <person name="Strong C."/>
            <person name="Du F."/>
            <person name="Carter J."/>
            <person name="Kremizki C."/>
            <person name="Layman D."/>
            <person name="Leonard S."/>
            <person name="Sun H."/>
            <person name="Fulton L."/>
            <person name="Nash W."/>
            <person name="Miner T."/>
            <person name="Minx P."/>
            <person name="Delehaunty K."/>
            <person name="Fronick C."/>
            <person name="Magrini V."/>
            <person name="Nhan M."/>
            <person name="Warren W."/>
            <person name="Florea L."/>
            <person name="Spieth J."/>
            <person name="Wilson R.K."/>
        </authorList>
    </citation>
    <scope>NUCLEOTIDE SEQUENCE [LARGE SCALE GENOMIC DNA]</scope>
    <source>
        <strain>ATCC 9150 / SARB42</strain>
    </source>
</reference>
<sequence length="235" mass="25246">MSNTPIELKGSSFTLSVVHLHEAEPEVIRQALEDKIAQAPAFLKHAPVVINVSGLESPVNWPELHKIVTSTGLRIIGVSGCKDASLKVEIDRMGLPLLTEGKEKAVRPAPVEPATPSEPPQNANPITKTRLIDVPVRSGQRIYAPQCDLIVTSHVSAGAELIADGNIHVYGMMRGRALAGASGDREAQIFCTHLTAELVSIAGVYWLSDKIPAEFYGKAARLRLADNALTVQPLN</sequence>
<proteinExistence type="inferred from homology"/>
<name>MINC_SALPA</name>
<protein>
    <recommendedName>
        <fullName evidence="1">Probable septum site-determining protein MinC</fullName>
    </recommendedName>
</protein>
<gene>
    <name evidence="1" type="primary">minC</name>
    <name type="ordered locus">SPA1059</name>
</gene>
<feature type="chain" id="PRO_1000047853" description="Probable septum site-determining protein MinC">
    <location>
        <begin position="1"/>
        <end position="235"/>
    </location>
</feature>
<feature type="region of interest" description="Disordered" evidence="2">
    <location>
        <begin position="104"/>
        <end position="125"/>
    </location>
</feature>
<feature type="compositionally biased region" description="Pro residues" evidence="2">
    <location>
        <begin position="110"/>
        <end position="119"/>
    </location>
</feature>
<keyword id="KW-0131">Cell cycle</keyword>
<keyword id="KW-0132">Cell division</keyword>
<keyword id="KW-0717">Septation</keyword>
<accession>Q5PI83</accession>
<comment type="function">
    <text evidence="1">Cell division inhibitor that blocks the formation of polar Z ring septums. Rapidly oscillates between the poles of the cell to destabilize FtsZ filaments that have formed before they mature into polar Z rings. Prevents FtsZ polymerization.</text>
</comment>
<comment type="subunit">
    <text evidence="1">Interacts with MinD and FtsZ.</text>
</comment>
<comment type="similarity">
    <text evidence="1">Belongs to the MinC family.</text>
</comment>
<dbReference type="EMBL" id="CP000026">
    <property type="protein sequence ID" value="AAV77030.1"/>
    <property type="molecule type" value="Genomic_DNA"/>
</dbReference>
<dbReference type="RefSeq" id="WP_000072527.1">
    <property type="nucleotide sequence ID" value="NC_006511.1"/>
</dbReference>
<dbReference type="SMR" id="Q5PI83"/>
<dbReference type="DNASU" id="3177565"/>
<dbReference type="KEGG" id="spt:SPA1059"/>
<dbReference type="HOGENOM" id="CLU_067812_0_1_6"/>
<dbReference type="Proteomes" id="UP000008185">
    <property type="component" value="Chromosome"/>
</dbReference>
<dbReference type="GO" id="GO:0000902">
    <property type="term" value="P:cell morphogenesis"/>
    <property type="evidence" value="ECO:0007669"/>
    <property type="project" value="InterPro"/>
</dbReference>
<dbReference type="GO" id="GO:0000917">
    <property type="term" value="P:division septum assembly"/>
    <property type="evidence" value="ECO:0007669"/>
    <property type="project" value="UniProtKB-KW"/>
</dbReference>
<dbReference type="GO" id="GO:0051302">
    <property type="term" value="P:regulation of cell division"/>
    <property type="evidence" value="ECO:0007669"/>
    <property type="project" value="InterPro"/>
</dbReference>
<dbReference type="GO" id="GO:1901891">
    <property type="term" value="P:regulation of cell septum assembly"/>
    <property type="evidence" value="ECO:0007669"/>
    <property type="project" value="InterPro"/>
</dbReference>
<dbReference type="FunFam" id="2.160.20.70:FF:000002">
    <property type="entry name" value="Probable septum site-determining protein MinC"/>
    <property type="match status" value="1"/>
</dbReference>
<dbReference type="Gene3D" id="2.160.20.70">
    <property type="match status" value="1"/>
</dbReference>
<dbReference type="Gene3D" id="3.30.70.260">
    <property type="match status" value="1"/>
</dbReference>
<dbReference type="HAMAP" id="MF_00267">
    <property type="entry name" value="MinC"/>
    <property type="match status" value="1"/>
</dbReference>
<dbReference type="InterPro" id="IPR016098">
    <property type="entry name" value="CAP/MinC_C"/>
</dbReference>
<dbReference type="InterPro" id="IPR013033">
    <property type="entry name" value="MinC"/>
</dbReference>
<dbReference type="InterPro" id="IPR036145">
    <property type="entry name" value="MinC_C_sf"/>
</dbReference>
<dbReference type="InterPro" id="IPR007874">
    <property type="entry name" value="MinC_N"/>
</dbReference>
<dbReference type="InterPro" id="IPR005526">
    <property type="entry name" value="Septum_form_inhib_MinC_C"/>
</dbReference>
<dbReference type="NCBIfam" id="TIGR01222">
    <property type="entry name" value="minC"/>
    <property type="match status" value="1"/>
</dbReference>
<dbReference type="PANTHER" id="PTHR34108">
    <property type="entry name" value="SEPTUM SITE-DETERMINING PROTEIN MINC"/>
    <property type="match status" value="1"/>
</dbReference>
<dbReference type="PANTHER" id="PTHR34108:SF1">
    <property type="entry name" value="SEPTUM SITE-DETERMINING PROTEIN MINC"/>
    <property type="match status" value="1"/>
</dbReference>
<dbReference type="Pfam" id="PF03775">
    <property type="entry name" value="MinC_C"/>
    <property type="match status" value="1"/>
</dbReference>
<dbReference type="Pfam" id="PF05209">
    <property type="entry name" value="MinC_N"/>
    <property type="match status" value="1"/>
</dbReference>
<dbReference type="SUPFAM" id="SSF63848">
    <property type="entry name" value="Cell-division inhibitor MinC, C-terminal domain"/>
    <property type="match status" value="1"/>
</dbReference>